<name>AROE_CHLPM</name>
<protein>
    <recommendedName>
        <fullName evidence="1">Shikimate dehydrogenase (NADP(+))</fullName>
        <shortName evidence="1">SDH</shortName>
        <ecNumber evidence="1">1.1.1.25</ecNumber>
    </recommendedName>
</protein>
<dbReference type="EC" id="1.1.1.25" evidence="1"/>
<dbReference type="EMBL" id="CP000607">
    <property type="protein sequence ID" value="ABP36561.1"/>
    <property type="molecule type" value="Genomic_DNA"/>
</dbReference>
<dbReference type="SMR" id="A4SDK2"/>
<dbReference type="STRING" id="290318.Cvib_0539"/>
<dbReference type="KEGG" id="pvi:Cvib_0539"/>
<dbReference type="eggNOG" id="COG0169">
    <property type="taxonomic scope" value="Bacteria"/>
</dbReference>
<dbReference type="HOGENOM" id="CLU_044063_1_1_10"/>
<dbReference type="OrthoDB" id="9792692at2"/>
<dbReference type="UniPathway" id="UPA00053">
    <property type="reaction ID" value="UER00087"/>
</dbReference>
<dbReference type="GO" id="GO:0005829">
    <property type="term" value="C:cytosol"/>
    <property type="evidence" value="ECO:0007669"/>
    <property type="project" value="TreeGrafter"/>
</dbReference>
<dbReference type="GO" id="GO:0050661">
    <property type="term" value="F:NADP binding"/>
    <property type="evidence" value="ECO:0007669"/>
    <property type="project" value="InterPro"/>
</dbReference>
<dbReference type="GO" id="GO:0004764">
    <property type="term" value="F:shikimate 3-dehydrogenase (NADP+) activity"/>
    <property type="evidence" value="ECO:0007669"/>
    <property type="project" value="UniProtKB-UniRule"/>
</dbReference>
<dbReference type="GO" id="GO:0008652">
    <property type="term" value="P:amino acid biosynthetic process"/>
    <property type="evidence" value="ECO:0007669"/>
    <property type="project" value="UniProtKB-KW"/>
</dbReference>
<dbReference type="GO" id="GO:0009073">
    <property type="term" value="P:aromatic amino acid family biosynthetic process"/>
    <property type="evidence" value="ECO:0007669"/>
    <property type="project" value="UniProtKB-KW"/>
</dbReference>
<dbReference type="GO" id="GO:0009423">
    <property type="term" value="P:chorismate biosynthetic process"/>
    <property type="evidence" value="ECO:0007669"/>
    <property type="project" value="UniProtKB-UniRule"/>
</dbReference>
<dbReference type="GO" id="GO:0019632">
    <property type="term" value="P:shikimate metabolic process"/>
    <property type="evidence" value="ECO:0007669"/>
    <property type="project" value="InterPro"/>
</dbReference>
<dbReference type="CDD" id="cd01065">
    <property type="entry name" value="NAD_bind_Shikimate_DH"/>
    <property type="match status" value="1"/>
</dbReference>
<dbReference type="Gene3D" id="3.40.50.10860">
    <property type="entry name" value="Leucine Dehydrogenase, chain A, domain 1"/>
    <property type="match status" value="1"/>
</dbReference>
<dbReference type="Gene3D" id="3.40.50.720">
    <property type="entry name" value="NAD(P)-binding Rossmann-like Domain"/>
    <property type="match status" value="1"/>
</dbReference>
<dbReference type="HAMAP" id="MF_00222">
    <property type="entry name" value="Shikimate_DH_AroE"/>
    <property type="match status" value="1"/>
</dbReference>
<dbReference type="InterPro" id="IPR046346">
    <property type="entry name" value="Aminoacid_DH-like_N_sf"/>
</dbReference>
<dbReference type="InterPro" id="IPR036291">
    <property type="entry name" value="NAD(P)-bd_dom_sf"/>
</dbReference>
<dbReference type="InterPro" id="IPR041121">
    <property type="entry name" value="SDH_C"/>
</dbReference>
<dbReference type="InterPro" id="IPR011342">
    <property type="entry name" value="Shikimate_DH"/>
</dbReference>
<dbReference type="InterPro" id="IPR013708">
    <property type="entry name" value="Shikimate_DH-bd_N"/>
</dbReference>
<dbReference type="InterPro" id="IPR022893">
    <property type="entry name" value="Shikimate_DH_fam"/>
</dbReference>
<dbReference type="NCBIfam" id="TIGR00507">
    <property type="entry name" value="aroE"/>
    <property type="match status" value="1"/>
</dbReference>
<dbReference type="PANTHER" id="PTHR21089:SF1">
    <property type="entry name" value="BIFUNCTIONAL 3-DEHYDROQUINATE DEHYDRATASE_SHIKIMATE DEHYDROGENASE, CHLOROPLASTIC"/>
    <property type="match status" value="1"/>
</dbReference>
<dbReference type="PANTHER" id="PTHR21089">
    <property type="entry name" value="SHIKIMATE DEHYDROGENASE"/>
    <property type="match status" value="1"/>
</dbReference>
<dbReference type="Pfam" id="PF18317">
    <property type="entry name" value="SDH_C"/>
    <property type="match status" value="1"/>
</dbReference>
<dbReference type="Pfam" id="PF08501">
    <property type="entry name" value="Shikimate_dh_N"/>
    <property type="match status" value="1"/>
</dbReference>
<dbReference type="SUPFAM" id="SSF53223">
    <property type="entry name" value="Aminoacid dehydrogenase-like, N-terminal domain"/>
    <property type="match status" value="1"/>
</dbReference>
<dbReference type="SUPFAM" id="SSF51735">
    <property type="entry name" value="NAD(P)-binding Rossmann-fold domains"/>
    <property type="match status" value="1"/>
</dbReference>
<keyword id="KW-0028">Amino-acid biosynthesis</keyword>
<keyword id="KW-0057">Aromatic amino acid biosynthesis</keyword>
<keyword id="KW-0521">NADP</keyword>
<keyword id="KW-0560">Oxidoreductase</keyword>
<feature type="chain" id="PRO_1000078125" description="Shikimate dehydrogenase (NADP(+))">
    <location>
        <begin position="1"/>
        <end position="290"/>
    </location>
</feature>
<feature type="active site" description="Proton acceptor" evidence="1">
    <location>
        <position position="70"/>
    </location>
</feature>
<feature type="binding site" evidence="1">
    <location>
        <begin position="18"/>
        <end position="20"/>
    </location>
    <ligand>
        <name>shikimate</name>
        <dbReference type="ChEBI" id="CHEBI:36208"/>
    </ligand>
</feature>
<feature type="binding site" evidence="1">
    <location>
        <position position="66"/>
    </location>
    <ligand>
        <name>shikimate</name>
        <dbReference type="ChEBI" id="CHEBI:36208"/>
    </ligand>
</feature>
<feature type="binding site" evidence="1">
    <location>
        <position position="82"/>
    </location>
    <ligand>
        <name>NADP(+)</name>
        <dbReference type="ChEBI" id="CHEBI:58349"/>
    </ligand>
</feature>
<feature type="binding site" evidence="1">
    <location>
        <position position="91"/>
    </location>
    <ligand>
        <name>shikimate</name>
        <dbReference type="ChEBI" id="CHEBI:36208"/>
    </ligand>
</feature>
<feature type="binding site" evidence="1">
    <location>
        <position position="106"/>
    </location>
    <ligand>
        <name>shikimate</name>
        <dbReference type="ChEBI" id="CHEBI:36208"/>
    </ligand>
</feature>
<feature type="binding site" evidence="1">
    <location>
        <begin position="130"/>
        <end position="134"/>
    </location>
    <ligand>
        <name>NADP(+)</name>
        <dbReference type="ChEBI" id="CHEBI:58349"/>
    </ligand>
</feature>
<feature type="binding site" evidence="1">
    <location>
        <position position="229"/>
    </location>
    <ligand>
        <name>NADP(+)</name>
        <dbReference type="ChEBI" id="CHEBI:58349"/>
    </ligand>
</feature>
<feature type="binding site" evidence="1">
    <location>
        <position position="231"/>
    </location>
    <ligand>
        <name>shikimate</name>
        <dbReference type="ChEBI" id="CHEBI:36208"/>
    </ligand>
</feature>
<feature type="binding site" evidence="1">
    <location>
        <position position="252"/>
    </location>
    <ligand>
        <name>NADP(+)</name>
        <dbReference type="ChEBI" id="CHEBI:58349"/>
    </ligand>
</feature>
<organism>
    <name type="scientific">Chlorobium phaeovibrioides (strain DSM 265 / 1930)</name>
    <name type="common">Prosthecochloris vibrioformis (strain DSM 265)</name>
    <dbReference type="NCBI Taxonomy" id="290318"/>
    <lineage>
        <taxon>Bacteria</taxon>
        <taxon>Pseudomonadati</taxon>
        <taxon>Chlorobiota</taxon>
        <taxon>Chlorobiia</taxon>
        <taxon>Chlorobiales</taxon>
        <taxon>Chlorobiaceae</taxon>
        <taxon>Chlorobium/Pelodictyon group</taxon>
        <taxon>Chlorobium</taxon>
    </lineage>
</organism>
<reference key="1">
    <citation type="submission" date="2007-03" db="EMBL/GenBank/DDBJ databases">
        <title>Complete sequence of Prosthecochloris vibrioformis DSM 265.</title>
        <authorList>
            <consortium name="US DOE Joint Genome Institute"/>
            <person name="Copeland A."/>
            <person name="Lucas S."/>
            <person name="Lapidus A."/>
            <person name="Barry K."/>
            <person name="Detter J.C."/>
            <person name="Glavina del Rio T."/>
            <person name="Hammon N."/>
            <person name="Israni S."/>
            <person name="Pitluck S."/>
            <person name="Schmutz J."/>
            <person name="Larimer F."/>
            <person name="Land M."/>
            <person name="Hauser L."/>
            <person name="Mikhailova N."/>
            <person name="Li T."/>
            <person name="Overmann J."/>
            <person name="Schuster S.C."/>
            <person name="Bryant D.A."/>
            <person name="Richardson P."/>
        </authorList>
    </citation>
    <scope>NUCLEOTIDE SEQUENCE [LARGE SCALE GENOMIC DNA]</scope>
    <source>
        <strain>DSM 265 / 1930</strain>
    </source>
</reference>
<comment type="function">
    <text evidence="1">Involved in the biosynthesis of the chorismate, which leads to the biosynthesis of aromatic amino acids. Catalyzes the reversible NADPH linked reduction of 3-dehydroshikimate (DHSA) to yield shikimate (SA).</text>
</comment>
<comment type="catalytic activity">
    <reaction evidence="1">
        <text>shikimate + NADP(+) = 3-dehydroshikimate + NADPH + H(+)</text>
        <dbReference type="Rhea" id="RHEA:17737"/>
        <dbReference type="ChEBI" id="CHEBI:15378"/>
        <dbReference type="ChEBI" id="CHEBI:16630"/>
        <dbReference type="ChEBI" id="CHEBI:36208"/>
        <dbReference type="ChEBI" id="CHEBI:57783"/>
        <dbReference type="ChEBI" id="CHEBI:58349"/>
        <dbReference type="EC" id="1.1.1.25"/>
    </reaction>
</comment>
<comment type="pathway">
    <text evidence="1">Metabolic intermediate biosynthesis; chorismate biosynthesis; chorismate from D-erythrose 4-phosphate and phosphoenolpyruvate: step 4/7.</text>
</comment>
<comment type="subunit">
    <text evidence="1">Homodimer.</text>
</comment>
<comment type="similarity">
    <text evidence="1">Belongs to the shikimate dehydrogenase family.</text>
</comment>
<evidence type="ECO:0000255" key="1">
    <source>
        <dbReference type="HAMAP-Rule" id="MF_00222"/>
    </source>
</evidence>
<sequence length="290" mass="30940">MRPATKIYGLIGRAVDYSYSPLIHNTAFEQLSLPCRYTIFNITEEHLVADALKGARALGLAGFSVTIPYKKTVVPLLDSLSEEAKSIQAVNTIVNHEGTLVGHNTDIAGFASPLLPHARSIQGRPVAILGSGGASLAAIEAFRTLFMPSEITLFMRNPAKETRMTDPAIKRCALGDLRESGSESSALLRDAAVVINATPVGTLGRPDAHMSPVPAESNLLHQGQIIYDMVYNPLDTPLLLAARKAGAVTIPGMEMLLAQGAAAFRLWTNLEMPMDAVRSALLNEIGASAI</sequence>
<accession>A4SDK2</accession>
<proteinExistence type="inferred from homology"/>
<gene>
    <name evidence="1" type="primary">aroE</name>
    <name type="ordered locus">Cvib_0539</name>
</gene>